<sequence>MQVTVETLEGLERRLNITVPAANIEDAVTAELRNIAKNRRFDGFRKGKVPLKMVAKMYGKAVRQDVLGEVMQRHFIEAIVKEKINPAGAPTFAPVENNEGADLVFTATFEVYPEVELKGLDSITVEKPTTEVNDSDVEEMIETLRKQQATWAEVEEAAEAGKRVSIDFVGSIDGEEFEGGKAENFPLEMGAGRMIPGFEDGIEGKTKGMEFEIDVNFPEDYHAENLKGKAAKFAIKVNKVEARELPELNDEFVSKFGVAEGGVEALKAEVRKNMERELKQAVKNRIKEQAIDGLVEQNEIDVPAALIDQEIQVLRQQAAQRFGGNPEAAAQLPRELFEEQAKRRVVVGLLLGEVIKSEELKADDEKVKALIEEMATAYEDPSEVIAYYEQNEQMMNNMRNVALEEQAIDAIIAKAQVSEKEVSFNELLNQQQPAA</sequence>
<organism>
    <name type="scientific">Vibrio campbellii (strain ATCC BAA-1116)</name>
    <dbReference type="NCBI Taxonomy" id="2902295"/>
    <lineage>
        <taxon>Bacteria</taxon>
        <taxon>Pseudomonadati</taxon>
        <taxon>Pseudomonadota</taxon>
        <taxon>Gammaproteobacteria</taxon>
        <taxon>Vibrionales</taxon>
        <taxon>Vibrionaceae</taxon>
        <taxon>Vibrio</taxon>
    </lineage>
</organism>
<gene>
    <name evidence="1" type="primary">tig</name>
    <name type="ordered locus">VIBHAR_01416</name>
</gene>
<evidence type="ECO:0000255" key="1">
    <source>
        <dbReference type="HAMAP-Rule" id="MF_00303"/>
    </source>
</evidence>
<accession>A7MV84</accession>
<dbReference type="EC" id="5.2.1.8" evidence="1"/>
<dbReference type="EMBL" id="CP000789">
    <property type="protein sequence ID" value="ABU70391.1"/>
    <property type="molecule type" value="Genomic_DNA"/>
</dbReference>
<dbReference type="RefSeq" id="WP_012127308.1">
    <property type="nucleotide sequence ID" value="NC_022269.1"/>
</dbReference>
<dbReference type="SMR" id="A7MV84"/>
<dbReference type="KEGG" id="vha:VIBHAR_01416"/>
<dbReference type="PATRIC" id="fig|338187.25.peg.1237"/>
<dbReference type="Proteomes" id="UP000008152">
    <property type="component" value="Chromosome I"/>
</dbReference>
<dbReference type="GO" id="GO:0005737">
    <property type="term" value="C:cytoplasm"/>
    <property type="evidence" value="ECO:0007669"/>
    <property type="project" value="UniProtKB-SubCell"/>
</dbReference>
<dbReference type="GO" id="GO:0003755">
    <property type="term" value="F:peptidyl-prolyl cis-trans isomerase activity"/>
    <property type="evidence" value="ECO:0007669"/>
    <property type="project" value="UniProtKB-UniRule"/>
</dbReference>
<dbReference type="GO" id="GO:0044183">
    <property type="term" value="F:protein folding chaperone"/>
    <property type="evidence" value="ECO:0007669"/>
    <property type="project" value="TreeGrafter"/>
</dbReference>
<dbReference type="GO" id="GO:0043022">
    <property type="term" value="F:ribosome binding"/>
    <property type="evidence" value="ECO:0007669"/>
    <property type="project" value="TreeGrafter"/>
</dbReference>
<dbReference type="GO" id="GO:0051083">
    <property type="term" value="P:'de novo' cotranslational protein folding"/>
    <property type="evidence" value="ECO:0007669"/>
    <property type="project" value="TreeGrafter"/>
</dbReference>
<dbReference type="GO" id="GO:0051301">
    <property type="term" value="P:cell division"/>
    <property type="evidence" value="ECO:0007669"/>
    <property type="project" value="UniProtKB-KW"/>
</dbReference>
<dbReference type="GO" id="GO:0061077">
    <property type="term" value="P:chaperone-mediated protein folding"/>
    <property type="evidence" value="ECO:0007669"/>
    <property type="project" value="TreeGrafter"/>
</dbReference>
<dbReference type="GO" id="GO:0015031">
    <property type="term" value="P:protein transport"/>
    <property type="evidence" value="ECO:0007669"/>
    <property type="project" value="UniProtKB-UniRule"/>
</dbReference>
<dbReference type="GO" id="GO:0043335">
    <property type="term" value="P:protein unfolding"/>
    <property type="evidence" value="ECO:0007669"/>
    <property type="project" value="TreeGrafter"/>
</dbReference>
<dbReference type="FunFam" id="3.10.50.40:FF:000001">
    <property type="entry name" value="Trigger factor"/>
    <property type="match status" value="1"/>
</dbReference>
<dbReference type="FunFam" id="3.30.70.1050:FF:000001">
    <property type="entry name" value="Trigger factor"/>
    <property type="match status" value="1"/>
</dbReference>
<dbReference type="Gene3D" id="3.10.50.40">
    <property type="match status" value="1"/>
</dbReference>
<dbReference type="Gene3D" id="3.30.70.1050">
    <property type="entry name" value="Trigger factor ribosome-binding domain"/>
    <property type="match status" value="1"/>
</dbReference>
<dbReference type="Gene3D" id="1.10.3120.10">
    <property type="entry name" value="Trigger factor, C-terminal domain"/>
    <property type="match status" value="1"/>
</dbReference>
<dbReference type="HAMAP" id="MF_00303">
    <property type="entry name" value="Trigger_factor_Tig"/>
    <property type="match status" value="1"/>
</dbReference>
<dbReference type="InterPro" id="IPR046357">
    <property type="entry name" value="PPIase_dom_sf"/>
</dbReference>
<dbReference type="InterPro" id="IPR001179">
    <property type="entry name" value="PPIase_FKBP_dom"/>
</dbReference>
<dbReference type="InterPro" id="IPR005215">
    <property type="entry name" value="Trig_fac"/>
</dbReference>
<dbReference type="InterPro" id="IPR008880">
    <property type="entry name" value="Trigger_fac_C"/>
</dbReference>
<dbReference type="InterPro" id="IPR037041">
    <property type="entry name" value="Trigger_fac_C_sf"/>
</dbReference>
<dbReference type="InterPro" id="IPR008881">
    <property type="entry name" value="Trigger_fac_ribosome-bd_bac"/>
</dbReference>
<dbReference type="InterPro" id="IPR036611">
    <property type="entry name" value="Trigger_fac_ribosome-bd_sf"/>
</dbReference>
<dbReference type="InterPro" id="IPR027304">
    <property type="entry name" value="Trigger_fact/SurA_dom_sf"/>
</dbReference>
<dbReference type="NCBIfam" id="TIGR00115">
    <property type="entry name" value="tig"/>
    <property type="match status" value="1"/>
</dbReference>
<dbReference type="PANTHER" id="PTHR30560">
    <property type="entry name" value="TRIGGER FACTOR CHAPERONE AND PEPTIDYL-PROLYL CIS/TRANS ISOMERASE"/>
    <property type="match status" value="1"/>
</dbReference>
<dbReference type="PANTHER" id="PTHR30560:SF3">
    <property type="entry name" value="TRIGGER FACTOR-LIKE PROTEIN TIG, CHLOROPLASTIC"/>
    <property type="match status" value="1"/>
</dbReference>
<dbReference type="Pfam" id="PF00254">
    <property type="entry name" value="FKBP_C"/>
    <property type="match status" value="1"/>
</dbReference>
<dbReference type="Pfam" id="PF05698">
    <property type="entry name" value="Trigger_C"/>
    <property type="match status" value="1"/>
</dbReference>
<dbReference type="Pfam" id="PF05697">
    <property type="entry name" value="Trigger_N"/>
    <property type="match status" value="1"/>
</dbReference>
<dbReference type="PIRSF" id="PIRSF003095">
    <property type="entry name" value="Trigger_factor"/>
    <property type="match status" value="1"/>
</dbReference>
<dbReference type="SUPFAM" id="SSF54534">
    <property type="entry name" value="FKBP-like"/>
    <property type="match status" value="1"/>
</dbReference>
<dbReference type="SUPFAM" id="SSF109998">
    <property type="entry name" value="Triger factor/SurA peptide-binding domain-like"/>
    <property type="match status" value="1"/>
</dbReference>
<dbReference type="SUPFAM" id="SSF102735">
    <property type="entry name" value="Trigger factor ribosome-binding domain"/>
    <property type="match status" value="1"/>
</dbReference>
<dbReference type="PROSITE" id="PS50059">
    <property type="entry name" value="FKBP_PPIASE"/>
    <property type="match status" value="1"/>
</dbReference>
<name>TIG_VIBC1</name>
<comment type="function">
    <text evidence="1">Involved in protein export. Acts as a chaperone by maintaining the newly synthesized protein in an open conformation. Functions as a peptidyl-prolyl cis-trans isomerase.</text>
</comment>
<comment type="catalytic activity">
    <reaction evidence="1">
        <text>[protein]-peptidylproline (omega=180) = [protein]-peptidylproline (omega=0)</text>
        <dbReference type="Rhea" id="RHEA:16237"/>
        <dbReference type="Rhea" id="RHEA-COMP:10747"/>
        <dbReference type="Rhea" id="RHEA-COMP:10748"/>
        <dbReference type="ChEBI" id="CHEBI:83833"/>
        <dbReference type="ChEBI" id="CHEBI:83834"/>
        <dbReference type="EC" id="5.2.1.8"/>
    </reaction>
</comment>
<comment type="subcellular location">
    <subcellularLocation>
        <location>Cytoplasm</location>
    </subcellularLocation>
    <text evidence="1">About half TF is bound to the ribosome near the polypeptide exit tunnel while the other half is free in the cytoplasm.</text>
</comment>
<comment type="domain">
    <text evidence="1">Consists of 3 domains; the N-terminus binds the ribosome, the middle domain has PPIase activity, while the C-terminus has intrinsic chaperone activity on its own.</text>
</comment>
<comment type="similarity">
    <text evidence="1">Belongs to the FKBP-type PPIase family. Tig subfamily.</text>
</comment>
<feature type="chain" id="PRO_1000022781" description="Trigger factor">
    <location>
        <begin position="1"/>
        <end position="435"/>
    </location>
</feature>
<feature type="domain" description="PPIase FKBP-type" evidence="1">
    <location>
        <begin position="161"/>
        <end position="246"/>
    </location>
</feature>
<proteinExistence type="inferred from homology"/>
<protein>
    <recommendedName>
        <fullName evidence="1">Trigger factor</fullName>
        <shortName evidence="1">TF</shortName>
        <ecNumber evidence="1">5.2.1.8</ecNumber>
    </recommendedName>
    <alternativeName>
        <fullName evidence="1">PPIase</fullName>
    </alternativeName>
</protein>
<reference key="1">
    <citation type="submission" date="2007-08" db="EMBL/GenBank/DDBJ databases">
        <authorList>
            <consortium name="The Vibrio harveyi Genome Sequencing Project"/>
            <person name="Bassler B."/>
            <person name="Clifton S.W."/>
            <person name="Fulton L."/>
            <person name="Delehaunty K."/>
            <person name="Fronick C."/>
            <person name="Harrison M."/>
            <person name="Markivic C."/>
            <person name="Fulton R."/>
            <person name="Tin-Wollam A.-M."/>
            <person name="Shah N."/>
            <person name="Pepin K."/>
            <person name="Nash W."/>
            <person name="Thiruvilangam P."/>
            <person name="Bhonagiri V."/>
            <person name="Waters C."/>
            <person name="Tu K.C."/>
            <person name="Irgon J."/>
            <person name="Wilson R.K."/>
        </authorList>
    </citation>
    <scope>NUCLEOTIDE SEQUENCE [LARGE SCALE GENOMIC DNA]</scope>
    <source>
        <strain>ATCC BAA-1116 / BB120</strain>
    </source>
</reference>
<keyword id="KW-0131">Cell cycle</keyword>
<keyword id="KW-0132">Cell division</keyword>
<keyword id="KW-0143">Chaperone</keyword>
<keyword id="KW-0963">Cytoplasm</keyword>
<keyword id="KW-0413">Isomerase</keyword>
<keyword id="KW-0697">Rotamase</keyword>